<protein>
    <recommendedName>
        <fullName evidence="1">Tyrosine--tRNA ligase</fullName>
        <ecNumber evidence="1">6.1.1.1</ecNumber>
    </recommendedName>
    <alternativeName>
        <fullName evidence="1">Tyrosyl-tRNA synthetase</fullName>
        <shortName evidence="1">TyrRS</shortName>
    </alternativeName>
</protein>
<reference key="1">
    <citation type="journal article" date="2003" name="J. Bacteriol.">
        <title>Comparative analyses of the complete genome sequences of Pierce's disease and citrus variegated chlorosis strains of Xylella fastidiosa.</title>
        <authorList>
            <person name="Van Sluys M.A."/>
            <person name="de Oliveira M.C."/>
            <person name="Monteiro-Vitorello C.B."/>
            <person name="Miyaki C.Y."/>
            <person name="Furlan L.R."/>
            <person name="Camargo L.E.A."/>
            <person name="da Silva A.C.R."/>
            <person name="Moon D.H."/>
            <person name="Takita M.A."/>
            <person name="Lemos E.G.M."/>
            <person name="Machado M.A."/>
            <person name="Ferro M.I.T."/>
            <person name="da Silva F.R."/>
            <person name="Goldman M.H.S."/>
            <person name="Goldman G.H."/>
            <person name="Lemos M.V.F."/>
            <person name="El-Dorry H."/>
            <person name="Tsai S.M."/>
            <person name="Carrer H."/>
            <person name="Carraro D.M."/>
            <person name="de Oliveira R.C."/>
            <person name="Nunes L.R."/>
            <person name="Siqueira W.J."/>
            <person name="Coutinho L.L."/>
            <person name="Kimura E.T."/>
            <person name="Ferro E.S."/>
            <person name="Harakava R."/>
            <person name="Kuramae E.E."/>
            <person name="Marino C.L."/>
            <person name="Giglioti E."/>
            <person name="Abreu I.L."/>
            <person name="Alves L.M.C."/>
            <person name="do Amaral A.M."/>
            <person name="Baia G.S."/>
            <person name="Blanco S.R."/>
            <person name="Brito M.S."/>
            <person name="Cannavan F.S."/>
            <person name="Celestino A.V."/>
            <person name="da Cunha A.F."/>
            <person name="Fenille R.C."/>
            <person name="Ferro J.A."/>
            <person name="Formighieri E.F."/>
            <person name="Kishi L.T."/>
            <person name="Leoni S.G."/>
            <person name="Oliveira A.R."/>
            <person name="Rosa V.E. Jr."/>
            <person name="Sassaki F.T."/>
            <person name="Sena J.A.D."/>
            <person name="de Souza A.A."/>
            <person name="Truffi D."/>
            <person name="Tsukumo F."/>
            <person name="Yanai G.M."/>
            <person name="Zaros L.G."/>
            <person name="Civerolo E.L."/>
            <person name="Simpson A.J.G."/>
            <person name="Almeida N.F. Jr."/>
            <person name="Setubal J.C."/>
            <person name="Kitajima J.P."/>
        </authorList>
    </citation>
    <scope>NUCLEOTIDE SEQUENCE [LARGE SCALE GENOMIC DNA]</scope>
    <source>
        <strain>Temecula1 / ATCC 700964</strain>
    </source>
</reference>
<evidence type="ECO:0000255" key="1">
    <source>
        <dbReference type="HAMAP-Rule" id="MF_02007"/>
    </source>
</evidence>
<dbReference type="EC" id="6.1.1.1" evidence="1"/>
<dbReference type="EMBL" id="AE009442">
    <property type="protein sequence ID" value="AAO28031.1"/>
    <property type="molecule type" value="Genomic_DNA"/>
</dbReference>
<dbReference type="RefSeq" id="WP_004087787.1">
    <property type="nucleotide sequence ID" value="NC_004556.1"/>
</dbReference>
<dbReference type="SMR" id="Q87F06"/>
<dbReference type="GeneID" id="93903823"/>
<dbReference type="KEGG" id="xft:PD_0132"/>
<dbReference type="HOGENOM" id="CLU_024003_5_0_6"/>
<dbReference type="Proteomes" id="UP000002516">
    <property type="component" value="Chromosome"/>
</dbReference>
<dbReference type="GO" id="GO:0005829">
    <property type="term" value="C:cytosol"/>
    <property type="evidence" value="ECO:0007669"/>
    <property type="project" value="TreeGrafter"/>
</dbReference>
<dbReference type="GO" id="GO:0005524">
    <property type="term" value="F:ATP binding"/>
    <property type="evidence" value="ECO:0007669"/>
    <property type="project" value="UniProtKB-UniRule"/>
</dbReference>
<dbReference type="GO" id="GO:0003723">
    <property type="term" value="F:RNA binding"/>
    <property type="evidence" value="ECO:0007669"/>
    <property type="project" value="UniProtKB-KW"/>
</dbReference>
<dbReference type="GO" id="GO:0004831">
    <property type="term" value="F:tyrosine-tRNA ligase activity"/>
    <property type="evidence" value="ECO:0007669"/>
    <property type="project" value="UniProtKB-UniRule"/>
</dbReference>
<dbReference type="GO" id="GO:0006437">
    <property type="term" value="P:tyrosyl-tRNA aminoacylation"/>
    <property type="evidence" value="ECO:0007669"/>
    <property type="project" value="UniProtKB-UniRule"/>
</dbReference>
<dbReference type="CDD" id="cd00165">
    <property type="entry name" value="S4"/>
    <property type="match status" value="1"/>
</dbReference>
<dbReference type="CDD" id="cd00805">
    <property type="entry name" value="TyrRS_core"/>
    <property type="match status" value="1"/>
</dbReference>
<dbReference type="FunFam" id="3.40.50.620:FF:000061">
    <property type="entry name" value="Tyrosine--tRNA ligase"/>
    <property type="match status" value="1"/>
</dbReference>
<dbReference type="Gene3D" id="3.40.50.620">
    <property type="entry name" value="HUPs"/>
    <property type="match status" value="1"/>
</dbReference>
<dbReference type="Gene3D" id="3.10.290.10">
    <property type="entry name" value="RNA-binding S4 domain"/>
    <property type="match status" value="1"/>
</dbReference>
<dbReference type="Gene3D" id="1.10.240.10">
    <property type="entry name" value="Tyrosyl-Transfer RNA Synthetase"/>
    <property type="match status" value="1"/>
</dbReference>
<dbReference type="HAMAP" id="MF_02007">
    <property type="entry name" value="Tyr_tRNA_synth_type2"/>
    <property type="match status" value="1"/>
</dbReference>
<dbReference type="InterPro" id="IPR001412">
    <property type="entry name" value="aa-tRNA-synth_I_CS"/>
</dbReference>
<dbReference type="InterPro" id="IPR002305">
    <property type="entry name" value="aa-tRNA-synth_Ic"/>
</dbReference>
<dbReference type="InterPro" id="IPR014729">
    <property type="entry name" value="Rossmann-like_a/b/a_fold"/>
</dbReference>
<dbReference type="InterPro" id="IPR002942">
    <property type="entry name" value="S4_RNA-bd"/>
</dbReference>
<dbReference type="InterPro" id="IPR036986">
    <property type="entry name" value="S4_RNA-bd_sf"/>
</dbReference>
<dbReference type="InterPro" id="IPR002307">
    <property type="entry name" value="Tyr-tRNA-ligase"/>
</dbReference>
<dbReference type="InterPro" id="IPR024088">
    <property type="entry name" value="Tyr-tRNA-ligase_bac-type"/>
</dbReference>
<dbReference type="InterPro" id="IPR024108">
    <property type="entry name" value="Tyr-tRNA-ligase_bac_2"/>
</dbReference>
<dbReference type="NCBIfam" id="TIGR00234">
    <property type="entry name" value="tyrS"/>
    <property type="match status" value="1"/>
</dbReference>
<dbReference type="PANTHER" id="PTHR11766:SF1">
    <property type="entry name" value="TYROSINE--TRNA LIGASE"/>
    <property type="match status" value="1"/>
</dbReference>
<dbReference type="PANTHER" id="PTHR11766">
    <property type="entry name" value="TYROSYL-TRNA SYNTHETASE"/>
    <property type="match status" value="1"/>
</dbReference>
<dbReference type="Pfam" id="PF00579">
    <property type="entry name" value="tRNA-synt_1b"/>
    <property type="match status" value="1"/>
</dbReference>
<dbReference type="PRINTS" id="PR01040">
    <property type="entry name" value="TRNASYNTHTYR"/>
</dbReference>
<dbReference type="SMART" id="SM00363">
    <property type="entry name" value="S4"/>
    <property type="match status" value="1"/>
</dbReference>
<dbReference type="SUPFAM" id="SSF55174">
    <property type="entry name" value="Alpha-L RNA-binding motif"/>
    <property type="match status" value="1"/>
</dbReference>
<dbReference type="SUPFAM" id="SSF52374">
    <property type="entry name" value="Nucleotidylyl transferase"/>
    <property type="match status" value="1"/>
</dbReference>
<dbReference type="PROSITE" id="PS00178">
    <property type="entry name" value="AA_TRNA_LIGASE_I"/>
    <property type="match status" value="1"/>
</dbReference>
<dbReference type="PROSITE" id="PS50889">
    <property type="entry name" value="S4"/>
    <property type="match status" value="1"/>
</dbReference>
<organism>
    <name type="scientific">Xylella fastidiosa (strain Temecula1 / ATCC 700964)</name>
    <dbReference type="NCBI Taxonomy" id="183190"/>
    <lineage>
        <taxon>Bacteria</taxon>
        <taxon>Pseudomonadati</taxon>
        <taxon>Pseudomonadota</taxon>
        <taxon>Gammaproteobacteria</taxon>
        <taxon>Lysobacterales</taxon>
        <taxon>Lysobacteraceae</taxon>
        <taxon>Xylella</taxon>
    </lineage>
</organism>
<comment type="function">
    <text evidence="1">Catalyzes the attachment of tyrosine to tRNA(Tyr) in a two-step reaction: tyrosine is first activated by ATP to form Tyr-AMP and then transferred to the acceptor end of tRNA(Tyr).</text>
</comment>
<comment type="catalytic activity">
    <reaction evidence="1">
        <text>tRNA(Tyr) + L-tyrosine + ATP = L-tyrosyl-tRNA(Tyr) + AMP + diphosphate + H(+)</text>
        <dbReference type="Rhea" id="RHEA:10220"/>
        <dbReference type="Rhea" id="RHEA-COMP:9706"/>
        <dbReference type="Rhea" id="RHEA-COMP:9707"/>
        <dbReference type="ChEBI" id="CHEBI:15378"/>
        <dbReference type="ChEBI" id="CHEBI:30616"/>
        <dbReference type="ChEBI" id="CHEBI:33019"/>
        <dbReference type="ChEBI" id="CHEBI:58315"/>
        <dbReference type="ChEBI" id="CHEBI:78442"/>
        <dbReference type="ChEBI" id="CHEBI:78536"/>
        <dbReference type="ChEBI" id="CHEBI:456215"/>
        <dbReference type="EC" id="6.1.1.1"/>
    </reaction>
</comment>
<comment type="subunit">
    <text evidence="1">Homodimer.</text>
</comment>
<comment type="subcellular location">
    <subcellularLocation>
        <location evidence="1">Cytoplasm</location>
    </subcellularLocation>
</comment>
<comment type="similarity">
    <text evidence="1">Belongs to the class-I aminoacyl-tRNA synthetase family. TyrS type 2 subfamily.</text>
</comment>
<accession>Q87F06</accession>
<keyword id="KW-0030">Aminoacyl-tRNA synthetase</keyword>
<keyword id="KW-0067">ATP-binding</keyword>
<keyword id="KW-0963">Cytoplasm</keyword>
<keyword id="KW-0436">Ligase</keyword>
<keyword id="KW-0547">Nucleotide-binding</keyword>
<keyword id="KW-0648">Protein biosynthesis</keyword>
<keyword id="KW-1185">Reference proteome</keyword>
<keyword id="KW-0694">RNA-binding</keyword>
<gene>
    <name evidence="1" type="primary">tyrS</name>
    <name type="ordered locus">PD_0132</name>
</gene>
<feature type="chain" id="PRO_0000236788" description="Tyrosine--tRNA ligase">
    <location>
        <begin position="1"/>
        <end position="418"/>
    </location>
</feature>
<feature type="domain" description="S4 RNA-binding" evidence="1">
    <location>
        <begin position="339"/>
        <end position="400"/>
    </location>
</feature>
<feature type="short sequence motif" description="'HIGH' region">
    <location>
        <begin position="42"/>
        <end position="51"/>
    </location>
</feature>
<feature type="short sequence motif" description="'KMSKS' region">
    <location>
        <begin position="226"/>
        <end position="230"/>
    </location>
</feature>
<feature type="binding site" evidence="1">
    <location>
        <position position="229"/>
    </location>
    <ligand>
        <name>ATP</name>
        <dbReference type="ChEBI" id="CHEBI:30616"/>
    </ligand>
</feature>
<proteinExistence type="inferred from homology"/>
<sequence length="418" mass="46706">MSLVSNSIALIERGANEILKFDELERRLRSGRPLRIKAGFDPTSPDLHLGHTVLLNKMRQFQDLGHQVVFLIGDFTGMIGDPTGKNVTRKPLSREDVLANASTYEDQVFKVLDRTLTEVRFNSEWFEKMSAVDMIKLAAQHTVARMLERDDFAKRFASQQPIVIHEFLYPLIQGYDSIALRADVELGGTDQKFNLLMGRALQEHHGQPPQIVLTMPLLEGLDGVAKMSKSLGNYIGIKEPPIDIVTKTMKIGDDLMWRWIELLSFKISAAEAVALREAVAKSELNPREVKLRLAHELVSRFYDNAAAEKAIAGWQAVVTGQGNNNLLPLQKINVPADGVRLVALLTKSGLAPSNSEAMRKLKERAVRVDGIVVDDAHLHFVPGFEGLIQIGKRNFIKVRLVTSSESQEFPESNRIDKS</sequence>
<name>SYY_XYLFT</name>